<name>L2HDH_BOVIN</name>
<reference key="1">
    <citation type="submission" date="2007-07" db="EMBL/GenBank/DDBJ databases">
        <authorList>
            <consortium name="NIH - Mammalian Gene Collection (MGC) project"/>
        </authorList>
    </citation>
    <scope>NUCLEOTIDE SEQUENCE [LARGE SCALE MRNA]</scope>
    <source>
        <strain>Hereford</strain>
        <tissue>Ascending colon</tissue>
    </source>
</reference>
<keyword id="KW-0007">Acetylation</keyword>
<keyword id="KW-0274">FAD</keyword>
<keyword id="KW-0285">Flavoprotein</keyword>
<keyword id="KW-0496">Mitochondrion</keyword>
<keyword id="KW-0560">Oxidoreductase</keyword>
<keyword id="KW-1185">Reference proteome</keyword>
<keyword id="KW-0809">Transit peptide</keyword>
<protein>
    <recommendedName>
        <fullName>L-2-hydroxyglutarate dehydrogenase, mitochondrial</fullName>
        <ecNumber>1.1.99.2</ecNumber>
    </recommendedName>
    <alternativeName>
        <fullName>Duranin</fullName>
    </alternativeName>
</protein>
<proteinExistence type="evidence at transcript level"/>
<gene>
    <name type="primary">L2HGDH</name>
</gene>
<accession>A7MBI3</accession>
<organism>
    <name type="scientific">Bos taurus</name>
    <name type="common">Bovine</name>
    <dbReference type="NCBI Taxonomy" id="9913"/>
    <lineage>
        <taxon>Eukaryota</taxon>
        <taxon>Metazoa</taxon>
        <taxon>Chordata</taxon>
        <taxon>Craniata</taxon>
        <taxon>Vertebrata</taxon>
        <taxon>Euteleostomi</taxon>
        <taxon>Mammalia</taxon>
        <taxon>Eutheria</taxon>
        <taxon>Laurasiatheria</taxon>
        <taxon>Artiodactyla</taxon>
        <taxon>Ruminantia</taxon>
        <taxon>Pecora</taxon>
        <taxon>Bovidae</taxon>
        <taxon>Bovinae</taxon>
        <taxon>Bos</taxon>
    </lineage>
</organism>
<sequence length="463" mass="51022">MVPALRYLGSVCGRARGIFPGGFSAAHTPASGKSRLLCQGGRRASTSSFDIVIIGGGIVGLASARALILRHPALSIGVLEKEKNLAVHQTGHNSGVIHSGIYYKPESLKAKLCVQGAALIYEYCNQKGISYKQCGKLIVAVEQEEIPRLQALYERGLQNGVQGLRLIQQEDIKKKEPYCRGLMAIDCPYTGIVDYRQVAFSFAKDFQEAGGSVLTNFEVEDIEMARESPSRSKDGMKYPIVIRNTKGEEVRCQYVVTCAGLYSDRISELSGCNPNPRIVPFRGDYLVLKPEKRYLVKGNIYPVPDSRFPFLGVHFTPRMDGNIWLGPNAILAFKREGYRPFDFSARDIMDIIIKSGLIKLVFQNFSYGVNEMYKACFLSATVKHLQKFIPEITISDVLRGPAGVRAQALDRDGNLIEDFVFDGGVGDIGNRILHVRNAPSPAATSSLAISGMIADEVQQRFKL</sequence>
<comment type="catalytic activity">
    <reaction>
        <text>(S)-2-hydroxyglutarate + A = 2-oxoglutarate + AH2</text>
        <dbReference type="Rhea" id="RHEA:21252"/>
        <dbReference type="ChEBI" id="CHEBI:13193"/>
        <dbReference type="ChEBI" id="CHEBI:16782"/>
        <dbReference type="ChEBI" id="CHEBI:16810"/>
        <dbReference type="ChEBI" id="CHEBI:17499"/>
        <dbReference type="EC" id="1.1.99.2"/>
    </reaction>
</comment>
<comment type="cofactor">
    <cofactor evidence="1">
        <name>FAD</name>
        <dbReference type="ChEBI" id="CHEBI:57692"/>
    </cofactor>
</comment>
<comment type="subcellular location">
    <subcellularLocation>
        <location evidence="1">Mitochondrion</location>
    </subcellularLocation>
</comment>
<comment type="similarity">
    <text evidence="4">Belongs to the L2HGDH family.</text>
</comment>
<feature type="transit peptide" description="Mitochondrion" evidence="3">
    <location>
        <begin position="1"/>
        <end position="52"/>
    </location>
</feature>
<feature type="chain" id="PRO_0000331213" description="L-2-hydroxyglutarate dehydrogenase, mitochondrial">
    <location>
        <begin position="53"/>
        <end position="463"/>
    </location>
</feature>
<feature type="modified residue" description="N6-acetyllysine" evidence="2">
    <location>
        <position position="104"/>
    </location>
</feature>
<feature type="modified residue" description="N6-acetyllysine" evidence="2">
    <location>
        <position position="173"/>
    </location>
</feature>
<dbReference type="EC" id="1.1.99.2"/>
<dbReference type="EMBL" id="BC151577">
    <property type="protein sequence ID" value="AAI51578.1"/>
    <property type="molecule type" value="mRNA"/>
</dbReference>
<dbReference type="RefSeq" id="NP_001094560.1">
    <property type="nucleotide sequence ID" value="NM_001101090.1"/>
</dbReference>
<dbReference type="SMR" id="A7MBI3"/>
<dbReference type="FunCoup" id="A7MBI3">
    <property type="interactions" value="1673"/>
</dbReference>
<dbReference type="STRING" id="9913.ENSBTAP00000020226"/>
<dbReference type="PaxDb" id="9913-ENSBTAP00000020226"/>
<dbReference type="Ensembl" id="ENSBTAT00000020226.5">
    <property type="protein sequence ID" value="ENSBTAP00000020226.3"/>
    <property type="gene ID" value="ENSBTAG00000005550.7"/>
</dbReference>
<dbReference type="GeneID" id="514230"/>
<dbReference type="KEGG" id="bta:514230"/>
<dbReference type="CTD" id="79944"/>
<dbReference type="VEuPathDB" id="HostDB:ENSBTAG00000015200"/>
<dbReference type="VGNC" id="VGNC:54490">
    <property type="gene designation" value="SOS2"/>
</dbReference>
<dbReference type="eggNOG" id="KOG2665">
    <property type="taxonomic scope" value="Eukaryota"/>
</dbReference>
<dbReference type="GeneTree" id="ENSGT00940000158324"/>
<dbReference type="HOGENOM" id="CLU_024775_0_0_1"/>
<dbReference type="InParanoid" id="A7MBI3"/>
<dbReference type="OMA" id="GVHFTRM"/>
<dbReference type="OrthoDB" id="498204at2759"/>
<dbReference type="TreeFam" id="TF105922"/>
<dbReference type="Reactome" id="R-BTA-880009">
    <property type="pathway name" value="Interconversion of 2-oxoglutarate and 2-hydroxyglutarate"/>
</dbReference>
<dbReference type="Proteomes" id="UP000009136">
    <property type="component" value="Chromosome 10"/>
</dbReference>
<dbReference type="Bgee" id="ENSBTAG00000015200">
    <property type="expression patterns" value="Expressed in rectus femoris and 104 other cell types or tissues"/>
</dbReference>
<dbReference type="GO" id="GO:0005739">
    <property type="term" value="C:mitochondrion"/>
    <property type="evidence" value="ECO:0007669"/>
    <property type="project" value="UniProtKB-SubCell"/>
</dbReference>
<dbReference type="GO" id="GO:0047545">
    <property type="term" value="F:2-hydroxyglutarate dehydrogenase activity"/>
    <property type="evidence" value="ECO:0000318"/>
    <property type="project" value="GO_Central"/>
</dbReference>
<dbReference type="Gene3D" id="3.30.9.10">
    <property type="entry name" value="D-Amino Acid Oxidase, subunit A, domain 2"/>
    <property type="match status" value="1"/>
</dbReference>
<dbReference type="Gene3D" id="3.50.50.60">
    <property type="entry name" value="FAD/NAD(P)-binding domain"/>
    <property type="match status" value="1"/>
</dbReference>
<dbReference type="InterPro" id="IPR006076">
    <property type="entry name" value="FAD-dep_OxRdtase"/>
</dbReference>
<dbReference type="InterPro" id="IPR036188">
    <property type="entry name" value="FAD/NAD-bd_sf"/>
</dbReference>
<dbReference type="NCBIfam" id="NF008726">
    <property type="entry name" value="PRK11728.1"/>
    <property type="match status" value="1"/>
</dbReference>
<dbReference type="PANTHER" id="PTHR43104">
    <property type="entry name" value="L-2-HYDROXYGLUTARATE DEHYDROGENASE, MITOCHONDRIAL"/>
    <property type="match status" value="1"/>
</dbReference>
<dbReference type="PANTHER" id="PTHR43104:SF2">
    <property type="entry name" value="L-2-HYDROXYGLUTARATE DEHYDROGENASE, MITOCHONDRIAL"/>
    <property type="match status" value="1"/>
</dbReference>
<dbReference type="Pfam" id="PF01266">
    <property type="entry name" value="DAO"/>
    <property type="match status" value="1"/>
</dbReference>
<dbReference type="SUPFAM" id="SSF51905">
    <property type="entry name" value="FAD/NAD(P)-binding domain"/>
    <property type="match status" value="1"/>
</dbReference>
<evidence type="ECO:0000250" key="1"/>
<evidence type="ECO:0000250" key="2">
    <source>
        <dbReference type="UniProtKB" id="Q91YP0"/>
    </source>
</evidence>
<evidence type="ECO:0000255" key="3"/>
<evidence type="ECO:0000305" key="4"/>